<accession>O24711</accession>
<dbReference type="EMBL" id="AB000111">
    <property type="protein sequence ID" value="BAA22473.1"/>
    <property type="molecule type" value="Genomic_DNA"/>
</dbReference>
<dbReference type="EMBL" id="AP008231">
    <property type="protein sequence ID" value="BAD80079.1"/>
    <property type="molecule type" value="Genomic_DNA"/>
</dbReference>
<dbReference type="RefSeq" id="WP_011244199.1">
    <property type="nucleotide sequence ID" value="NZ_CP085785.1"/>
</dbReference>
<dbReference type="SMR" id="O24711"/>
<dbReference type="GeneID" id="72431091"/>
<dbReference type="KEGG" id="syc:syc1889_d"/>
<dbReference type="eggNOG" id="COG0203">
    <property type="taxonomic scope" value="Bacteria"/>
</dbReference>
<dbReference type="Proteomes" id="UP000001175">
    <property type="component" value="Chromosome"/>
</dbReference>
<dbReference type="GO" id="GO:0022625">
    <property type="term" value="C:cytosolic large ribosomal subunit"/>
    <property type="evidence" value="ECO:0007669"/>
    <property type="project" value="TreeGrafter"/>
</dbReference>
<dbReference type="GO" id="GO:0003735">
    <property type="term" value="F:structural constituent of ribosome"/>
    <property type="evidence" value="ECO:0007669"/>
    <property type="project" value="InterPro"/>
</dbReference>
<dbReference type="GO" id="GO:0006412">
    <property type="term" value="P:translation"/>
    <property type="evidence" value="ECO:0007669"/>
    <property type="project" value="UniProtKB-UniRule"/>
</dbReference>
<dbReference type="FunFam" id="3.90.1030.10:FF:000001">
    <property type="entry name" value="50S ribosomal protein L17"/>
    <property type="match status" value="1"/>
</dbReference>
<dbReference type="Gene3D" id="3.90.1030.10">
    <property type="entry name" value="Ribosomal protein L17"/>
    <property type="match status" value="1"/>
</dbReference>
<dbReference type="HAMAP" id="MF_01368">
    <property type="entry name" value="Ribosomal_bL17"/>
    <property type="match status" value="1"/>
</dbReference>
<dbReference type="InterPro" id="IPR000456">
    <property type="entry name" value="Ribosomal_bL17"/>
</dbReference>
<dbReference type="InterPro" id="IPR036373">
    <property type="entry name" value="Ribosomal_bL17_sf"/>
</dbReference>
<dbReference type="NCBIfam" id="TIGR00059">
    <property type="entry name" value="L17"/>
    <property type="match status" value="1"/>
</dbReference>
<dbReference type="PANTHER" id="PTHR14413:SF16">
    <property type="entry name" value="LARGE RIBOSOMAL SUBUNIT PROTEIN BL17M"/>
    <property type="match status" value="1"/>
</dbReference>
<dbReference type="PANTHER" id="PTHR14413">
    <property type="entry name" value="RIBOSOMAL PROTEIN L17"/>
    <property type="match status" value="1"/>
</dbReference>
<dbReference type="Pfam" id="PF01196">
    <property type="entry name" value="Ribosomal_L17"/>
    <property type="match status" value="1"/>
</dbReference>
<dbReference type="SUPFAM" id="SSF64263">
    <property type="entry name" value="Prokaryotic ribosomal protein L17"/>
    <property type="match status" value="1"/>
</dbReference>
<name>RL17_SYNP6</name>
<reference key="1">
    <citation type="journal article" date="1997" name="Gene">
        <title>Organization of a large gene cluster encoding ribosomal proteins in the cyanobacterium Synechococcus sp. strain PCC 6301: comparison of gene clusters among cyanobacteria, eubacteria and chloroplast genomes.</title>
        <authorList>
            <person name="Sugita M."/>
            <person name="Sugishita H."/>
            <person name="Fujishiro T."/>
            <person name="Tsuboi M."/>
            <person name="Sugita C."/>
            <person name="Endo T."/>
            <person name="Sugiura M."/>
        </authorList>
    </citation>
    <scope>NUCLEOTIDE SEQUENCE [GENOMIC DNA]</scope>
</reference>
<reference key="2">
    <citation type="journal article" date="2007" name="Photosyn. Res.">
        <title>Complete nucleotide sequence of the freshwater unicellular cyanobacterium Synechococcus elongatus PCC 6301 chromosome: gene content and organization.</title>
        <authorList>
            <person name="Sugita C."/>
            <person name="Ogata K."/>
            <person name="Shikata M."/>
            <person name="Jikuya H."/>
            <person name="Takano J."/>
            <person name="Furumichi M."/>
            <person name="Kanehisa M."/>
            <person name="Omata T."/>
            <person name="Sugiura M."/>
            <person name="Sugita M."/>
        </authorList>
    </citation>
    <scope>NUCLEOTIDE SEQUENCE [LARGE SCALE GENOMIC DNA]</scope>
    <source>
        <strain>ATCC 27144 / PCC 6301 / SAUG 1402/1</strain>
    </source>
</reference>
<feature type="chain" id="PRO_0000175544" description="Large ribosomal subunit protein bL17">
    <location>
        <begin position="1"/>
        <end position="116"/>
    </location>
</feature>
<keyword id="KW-0687">Ribonucleoprotein</keyword>
<keyword id="KW-0689">Ribosomal protein</keyword>
<organism>
    <name type="scientific">Synechococcus sp. (strain ATCC 27144 / PCC 6301 / SAUG 1402/1)</name>
    <name type="common">Anacystis nidulans</name>
    <dbReference type="NCBI Taxonomy" id="269084"/>
    <lineage>
        <taxon>Bacteria</taxon>
        <taxon>Bacillati</taxon>
        <taxon>Cyanobacteriota</taxon>
        <taxon>Cyanophyceae</taxon>
        <taxon>Synechococcales</taxon>
        <taxon>Synechococcaceae</taxon>
        <taxon>Synechococcus</taxon>
    </lineage>
</organism>
<sequence length="116" mass="13262">MRHRCNVPQLGRPADQRKALLRSLTTEIIRNGTVTTTKARAKAVRSEVERMVTLAKDGSLAARRQALGYIYDKQLVHLLFEQAPERYAKRQGGYTRILRTVRRRGDNAEMAIIELT</sequence>
<evidence type="ECO:0000255" key="1">
    <source>
        <dbReference type="HAMAP-Rule" id="MF_01368"/>
    </source>
</evidence>
<evidence type="ECO:0000305" key="2"/>
<gene>
    <name evidence="1" type="primary">rplQ</name>
    <name evidence="1" type="synonym">rpl17</name>
    <name type="ordered locus">syc1889_d</name>
</gene>
<comment type="subunit">
    <text evidence="1">Part of the 50S ribosomal subunit. Contacts protein L32.</text>
</comment>
<comment type="similarity">
    <text evidence="1">Belongs to the bacterial ribosomal protein bL17 family.</text>
</comment>
<proteinExistence type="inferred from homology"/>
<protein>
    <recommendedName>
        <fullName evidence="1">Large ribosomal subunit protein bL17</fullName>
    </recommendedName>
    <alternativeName>
        <fullName evidence="2">50S ribosomal protein L17</fullName>
    </alternativeName>
</protein>